<protein>
    <recommendedName>
        <fullName evidence="1">tRNA pseudouridine synthase D</fullName>
        <ecNumber evidence="1">5.4.99.27</ecNumber>
    </recommendedName>
    <alternativeName>
        <fullName evidence="1">tRNA pseudouridine(13) synthase</fullName>
    </alternativeName>
    <alternativeName>
        <fullName evidence="1">tRNA pseudouridylate synthase D</fullName>
    </alternativeName>
    <alternativeName>
        <fullName evidence="1">tRNA-uridine isomerase D</fullName>
    </alternativeName>
</protein>
<proteinExistence type="inferred from homology"/>
<evidence type="ECO:0000255" key="1">
    <source>
        <dbReference type="HAMAP-Rule" id="MF_01082"/>
    </source>
</evidence>
<sequence>MDMENLTWLHGKPTASGILKANPEDFVVVEDLGFEPDGEGEHLLVRIRKNGCNTQFVADYLARFAKLHPRLVSYAGLKDRHAVTEQWFCLHLPGKEAPDLATFELEGCEVLEAVRHKRKLRIGSLKGNAFTLVLRHITDRQDVEQRLQQIAAQGVPNYFGSQRFGRGGNNLVQARLWANNEIRVKERSKRSFYLSASRSAMFNLISSYRLAQQLSTTVLEGDALQLSGRGSWFVAQADELAALQQRVTAGELNITAPLPGDSELGTHGEALAFEQACLAEQTELLSLIKRERVEGSRRAVLLKPQNMISNWWDDVTLELSFWLPAGSFATSVVREIMNQDRADDTDIIE</sequence>
<dbReference type="EC" id="5.4.99.27" evidence="1"/>
<dbReference type="EMBL" id="AL590842">
    <property type="protein sequence ID" value="CAL21948.1"/>
    <property type="molecule type" value="Genomic_DNA"/>
</dbReference>
<dbReference type="EMBL" id="AE009952">
    <property type="protein sequence ID" value="AAM84415.1"/>
    <property type="molecule type" value="Genomic_DNA"/>
</dbReference>
<dbReference type="EMBL" id="AE017042">
    <property type="protein sequence ID" value="AAS60601.1"/>
    <property type="molecule type" value="Genomic_DNA"/>
</dbReference>
<dbReference type="PIR" id="AI0407">
    <property type="entry name" value="AI0407"/>
</dbReference>
<dbReference type="RefSeq" id="WP_002209393.1">
    <property type="nucleotide sequence ID" value="NZ_WUCM01000008.1"/>
</dbReference>
<dbReference type="RefSeq" id="YP_002348252.1">
    <property type="nucleotide sequence ID" value="NC_003143.1"/>
</dbReference>
<dbReference type="SMR" id="Q8ZBP8"/>
<dbReference type="IntAct" id="Q8ZBP8">
    <property type="interactions" value="3"/>
</dbReference>
<dbReference type="STRING" id="214092.YPO3359"/>
<dbReference type="PaxDb" id="214092-YPO3359"/>
<dbReference type="DNASU" id="1145777"/>
<dbReference type="EnsemblBacteria" id="AAS60601">
    <property type="protein sequence ID" value="AAS60601"/>
    <property type="gene ID" value="YP_0328"/>
</dbReference>
<dbReference type="GeneID" id="57975350"/>
<dbReference type="KEGG" id="ype:YPO3359"/>
<dbReference type="KEGG" id="ypk:y0830"/>
<dbReference type="KEGG" id="ypm:YP_0328"/>
<dbReference type="PATRIC" id="fig|214092.21.peg.3836"/>
<dbReference type="eggNOG" id="COG0585">
    <property type="taxonomic scope" value="Bacteria"/>
</dbReference>
<dbReference type="HOGENOM" id="CLU_005281_4_0_6"/>
<dbReference type="OMA" id="LWLWVEK"/>
<dbReference type="OrthoDB" id="1550679at2"/>
<dbReference type="Proteomes" id="UP000000815">
    <property type="component" value="Chromosome"/>
</dbReference>
<dbReference type="Proteomes" id="UP000001019">
    <property type="component" value="Chromosome"/>
</dbReference>
<dbReference type="Proteomes" id="UP000002490">
    <property type="component" value="Chromosome"/>
</dbReference>
<dbReference type="GO" id="GO:0005829">
    <property type="term" value="C:cytosol"/>
    <property type="evidence" value="ECO:0000318"/>
    <property type="project" value="GO_Central"/>
</dbReference>
<dbReference type="GO" id="GO:0009982">
    <property type="term" value="F:pseudouridine synthase activity"/>
    <property type="evidence" value="ECO:0000318"/>
    <property type="project" value="GO_Central"/>
</dbReference>
<dbReference type="GO" id="GO:0003723">
    <property type="term" value="F:RNA binding"/>
    <property type="evidence" value="ECO:0007669"/>
    <property type="project" value="InterPro"/>
</dbReference>
<dbReference type="GO" id="GO:0160150">
    <property type="term" value="F:tRNA pseudouridine(13) synthase activity"/>
    <property type="evidence" value="ECO:0007669"/>
    <property type="project" value="UniProtKB-EC"/>
</dbReference>
<dbReference type="GO" id="GO:0001522">
    <property type="term" value="P:pseudouridine synthesis"/>
    <property type="evidence" value="ECO:0000318"/>
    <property type="project" value="GO_Central"/>
</dbReference>
<dbReference type="GO" id="GO:0031119">
    <property type="term" value="P:tRNA pseudouridine synthesis"/>
    <property type="evidence" value="ECO:0007669"/>
    <property type="project" value="UniProtKB-UniRule"/>
</dbReference>
<dbReference type="CDD" id="cd02575">
    <property type="entry name" value="PseudoU_synth_EcTruD"/>
    <property type="match status" value="1"/>
</dbReference>
<dbReference type="FunFam" id="3.30.2340.10:FF:000001">
    <property type="entry name" value="tRNA pseudouridine synthase D"/>
    <property type="match status" value="1"/>
</dbReference>
<dbReference type="FunFam" id="3.30.2350.20:FF:000001">
    <property type="entry name" value="tRNA pseudouridine synthase D"/>
    <property type="match status" value="1"/>
</dbReference>
<dbReference type="Gene3D" id="3.30.2350.20">
    <property type="entry name" value="TruD, catalytic domain"/>
    <property type="match status" value="1"/>
</dbReference>
<dbReference type="Gene3D" id="3.30.2340.10">
    <property type="entry name" value="TruD, insertion domain"/>
    <property type="match status" value="1"/>
</dbReference>
<dbReference type="HAMAP" id="MF_01082">
    <property type="entry name" value="TruD"/>
    <property type="match status" value="1"/>
</dbReference>
<dbReference type="InterPro" id="IPR020103">
    <property type="entry name" value="PsdUridine_synth_cat_dom_sf"/>
</dbReference>
<dbReference type="InterPro" id="IPR001656">
    <property type="entry name" value="PsdUridine_synth_TruD"/>
</dbReference>
<dbReference type="InterPro" id="IPR020119">
    <property type="entry name" value="PsdUridine_synth_TruD_CS"/>
</dbReference>
<dbReference type="InterPro" id="IPR011760">
    <property type="entry name" value="PsdUridine_synth_TruD_insert"/>
</dbReference>
<dbReference type="InterPro" id="IPR042214">
    <property type="entry name" value="TruD_catalytic"/>
</dbReference>
<dbReference type="InterPro" id="IPR043165">
    <property type="entry name" value="TruD_insert_sf"/>
</dbReference>
<dbReference type="InterPro" id="IPR050170">
    <property type="entry name" value="TruD_pseudoU_synthase"/>
</dbReference>
<dbReference type="NCBIfam" id="NF002155">
    <property type="entry name" value="PRK00984.1-4"/>
    <property type="match status" value="1"/>
</dbReference>
<dbReference type="NCBIfam" id="TIGR00094">
    <property type="entry name" value="tRNA_TruD_broad"/>
    <property type="match status" value="1"/>
</dbReference>
<dbReference type="PANTHER" id="PTHR47811">
    <property type="entry name" value="TRNA PSEUDOURIDINE SYNTHASE D"/>
    <property type="match status" value="1"/>
</dbReference>
<dbReference type="PANTHER" id="PTHR47811:SF1">
    <property type="entry name" value="TRNA PSEUDOURIDINE SYNTHASE D"/>
    <property type="match status" value="1"/>
</dbReference>
<dbReference type="Pfam" id="PF01142">
    <property type="entry name" value="TruD"/>
    <property type="match status" value="2"/>
</dbReference>
<dbReference type="SUPFAM" id="SSF55120">
    <property type="entry name" value="Pseudouridine synthase"/>
    <property type="match status" value="1"/>
</dbReference>
<dbReference type="PROSITE" id="PS50984">
    <property type="entry name" value="TRUD"/>
    <property type="match status" value="1"/>
</dbReference>
<dbReference type="PROSITE" id="PS01268">
    <property type="entry name" value="UPF0024"/>
    <property type="match status" value="1"/>
</dbReference>
<organism>
    <name type="scientific">Yersinia pestis</name>
    <dbReference type="NCBI Taxonomy" id="632"/>
    <lineage>
        <taxon>Bacteria</taxon>
        <taxon>Pseudomonadati</taxon>
        <taxon>Pseudomonadota</taxon>
        <taxon>Gammaproteobacteria</taxon>
        <taxon>Enterobacterales</taxon>
        <taxon>Yersiniaceae</taxon>
        <taxon>Yersinia</taxon>
    </lineage>
</organism>
<comment type="function">
    <text evidence="1">Responsible for synthesis of pseudouridine from uracil-13 in transfer RNAs.</text>
</comment>
<comment type="catalytic activity">
    <reaction evidence="1">
        <text>uridine(13) in tRNA = pseudouridine(13) in tRNA</text>
        <dbReference type="Rhea" id="RHEA:42540"/>
        <dbReference type="Rhea" id="RHEA-COMP:10105"/>
        <dbReference type="Rhea" id="RHEA-COMP:10106"/>
        <dbReference type="ChEBI" id="CHEBI:65314"/>
        <dbReference type="ChEBI" id="CHEBI:65315"/>
        <dbReference type="EC" id="5.4.99.27"/>
    </reaction>
</comment>
<comment type="similarity">
    <text evidence="1">Belongs to the pseudouridine synthase TruD family.</text>
</comment>
<reference key="1">
    <citation type="journal article" date="2001" name="Nature">
        <title>Genome sequence of Yersinia pestis, the causative agent of plague.</title>
        <authorList>
            <person name="Parkhill J."/>
            <person name="Wren B.W."/>
            <person name="Thomson N.R."/>
            <person name="Titball R.W."/>
            <person name="Holden M.T.G."/>
            <person name="Prentice M.B."/>
            <person name="Sebaihia M."/>
            <person name="James K.D."/>
            <person name="Churcher C.M."/>
            <person name="Mungall K.L."/>
            <person name="Baker S."/>
            <person name="Basham D."/>
            <person name="Bentley S.D."/>
            <person name="Brooks K."/>
            <person name="Cerdeno-Tarraga A.-M."/>
            <person name="Chillingworth T."/>
            <person name="Cronin A."/>
            <person name="Davies R.M."/>
            <person name="Davis P."/>
            <person name="Dougan G."/>
            <person name="Feltwell T."/>
            <person name="Hamlin N."/>
            <person name="Holroyd S."/>
            <person name="Jagels K."/>
            <person name="Karlyshev A.V."/>
            <person name="Leather S."/>
            <person name="Moule S."/>
            <person name="Oyston P.C.F."/>
            <person name="Quail M.A."/>
            <person name="Rutherford K.M."/>
            <person name="Simmonds M."/>
            <person name="Skelton J."/>
            <person name="Stevens K."/>
            <person name="Whitehead S."/>
            <person name="Barrell B.G."/>
        </authorList>
    </citation>
    <scope>NUCLEOTIDE SEQUENCE [LARGE SCALE GENOMIC DNA]</scope>
    <source>
        <strain>CO-92 / Biovar Orientalis</strain>
    </source>
</reference>
<reference key="2">
    <citation type="journal article" date="2002" name="J. Bacteriol.">
        <title>Genome sequence of Yersinia pestis KIM.</title>
        <authorList>
            <person name="Deng W."/>
            <person name="Burland V."/>
            <person name="Plunkett G. III"/>
            <person name="Boutin A."/>
            <person name="Mayhew G.F."/>
            <person name="Liss P."/>
            <person name="Perna N.T."/>
            <person name="Rose D.J."/>
            <person name="Mau B."/>
            <person name="Zhou S."/>
            <person name="Schwartz D.C."/>
            <person name="Fetherston J.D."/>
            <person name="Lindler L.E."/>
            <person name="Brubaker R.R."/>
            <person name="Plano G.V."/>
            <person name="Straley S.C."/>
            <person name="McDonough K.A."/>
            <person name="Nilles M.L."/>
            <person name="Matson J.S."/>
            <person name="Blattner F.R."/>
            <person name="Perry R.D."/>
        </authorList>
    </citation>
    <scope>NUCLEOTIDE SEQUENCE [LARGE SCALE GENOMIC DNA]</scope>
    <source>
        <strain>KIM10+ / Biovar Mediaevalis</strain>
    </source>
</reference>
<reference key="3">
    <citation type="journal article" date="2004" name="DNA Res.">
        <title>Complete genome sequence of Yersinia pestis strain 91001, an isolate avirulent to humans.</title>
        <authorList>
            <person name="Song Y."/>
            <person name="Tong Z."/>
            <person name="Wang J."/>
            <person name="Wang L."/>
            <person name="Guo Z."/>
            <person name="Han Y."/>
            <person name="Zhang J."/>
            <person name="Pei D."/>
            <person name="Zhou D."/>
            <person name="Qin H."/>
            <person name="Pang X."/>
            <person name="Han Y."/>
            <person name="Zhai J."/>
            <person name="Li M."/>
            <person name="Cui B."/>
            <person name="Qi Z."/>
            <person name="Jin L."/>
            <person name="Dai R."/>
            <person name="Chen F."/>
            <person name="Li S."/>
            <person name="Ye C."/>
            <person name="Du Z."/>
            <person name="Lin W."/>
            <person name="Wang J."/>
            <person name="Yu J."/>
            <person name="Yang H."/>
            <person name="Wang J."/>
            <person name="Huang P."/>
            <person name="Yang R."/>
        </authorList>
    </citation>
    <scope>NUCLEOTIDE SEQUENCE [LARGE SCALE GENOMIC DNA]</scope>
    <source>
        <strain>91001 / Biovar Mediaevalis</strain>
    </source>
</reference>
<keyword id="KW-0413">Isomerase</keyword>
<keyword id="KW-1185">Reference proteome</keyword>
<keyword id="KW-0819">tRNA processing</keyword>
<name>TRUD_YERPE</name>
<feature type="chain" id="PRO_0000152534" description="tRNA pseudouridine synthase D">
    <location>
        <begin position="1"/>
        <end position="349"/>
    </location>
</feature>
<feature type="domain" description="TRUD" evidence="1">
    <location>
        <begin position="154"/>
        <end position="302"/>
    </location>
</feature>
<feature type="active site" description="Nucleophile" evidence="1">
    <location>
        <position position="79"/>
    </location>
</feature>
<feature type="binding site" evidence="1">
    <location>
        <position position="26"/>
    </location>
    <ligand>
        <name>substrate</name>
    </ligand>
</feature>
<feature type="binding site" evidence="1">
    <location>
        <position position="128"/>
    </location>
    <ligand>
        <name>substrate</name>
    </ligand>
</feature>
<feature type="binding site" evidence="1">
    <location>
        <position position="328"/>
    </location>
    <ligand>
        <name>substrate</name>
    </ligand>
</feature>
<accession>Q8ZBP8</accession>
<accession>Q0WBT6</accession>
<gene>
    <name evidence="1" type="primary">truD</name>
    <name type="ordered locus">YPO3359</name>
    <name type="ordered locus">y0830</name>
    <name type="ordered locus">YP_0328</name>
</gene>